<reference key="1">
    <citation type="journal article" date="2005" name="Science">
        <title>The transcriptional landscape of the mammalian genome.</title>
        <authorList>
            <person name="Carninci P."/>
            <person name="Kasukawa T."/>
            <person name="Katayama S."/>
            <person name="Gough J."/>
            <person name="Frith M.C."/>
            <person name="Maeda N."/>
            <person name="Oyama R."/>
            <person name="Ravasi T."/>
            <person name="Lenhard B."/>
            <person name="Wells C."/>
            <person name="Kodzius R."/>
            <person name="Shimokawa K."/>
            <person name="Bajic V.B."/>
            <person name="Brenner S.E."/>
            <person name="Batalov S."/>
            <person name="Forrest A.R."/>
            <person name="Zavolan M."/>
            <person name="Davis M.J."/>
            <person name="Wilming L.G."/>
            <person name="Aidinis V."/>
            <person name="Allen J.E."/>
            <person name="Ambesi-Impiombato A."/>
            <person name="Apweiler R."/>
            <person name="Aturaliya R.N."/>
            <person name="Bailey T.L."/>
            <person name="Bansal M."/>
            <person name="Baxter L."/>
            <person name="Beisel K.W."/>
            <person name="Bersano T."/>
            <person name="Bono H."/>
            <person name="Chalk A.M."/>
            <person name="Chiu K.P."/>
            <person name="Choudhary V."/>
            <person name="Christoffels A."/>
            <person name="Clutterbuck D.R."/>
            <person name="Crowe M.L."/>
            <person name="Dalla E."/>
            <person name="Dalrymple B.P."/>
            <person name="de Bono B."/>
            <person name="Della Gatta G."/>
            <person name="di Bernardo D."/>
            <person name="Down T."/>
            <person name="Engstrom P."/>
            <person name="Fagiolini M."/>
            <person name="Faulkner G."/>
            <person name="Fletcher C.F."/>
            <person name="Fukushima T."/>
            <person name="Furuno M."/>
            <person name="Futaki S."/>
            <person name="Gariboldi M."/>
            <person name="Georgii-Hemming P."/>
            <person name="Gingeras T.R."/>
            <person name="Gojobori T."/>
            <person name="Green R.E."/>
            <person name="Gustincich S."/>
            <person name="Harbers M."/>
            <person name="Hayashi Y."/>
            <person name="Hensch T.K."/>
            <person name="Hirokawa N."/>
            <person name="Hill D."/>
            <person name="Huminiecki L."/>
            <person name="Iacono M."/>
            <person name="Ikeo K."/>
            <person name="Iwama A."/>
            <person name="Ishikawa T."/>
            <person name="Jakt M."/>
            <person name="Kanapin A."/>
            <person name="Katoh M."/>
            <person name="Kawasawa Y."/>
            <person name="Kelso J."/>
            <person name="Kitamura H."/>
            <person name="Kitano H."/>
            <person name="Kollias G."/>
            <person name="Krishnan S.P."/>
            <person name="Kruger A."/>
            <person name="Kummerfeld S.K."/>
            <person name="Kurochkin I.V."/>
            <person name="Lareau L.F."/>
            <person name="Lazarevic D."/>
            <person name="Lipovich L."/>
            <person name="Liu J."/>
            <person name="Liuni S."/>
            <person name="McWilliam S."/>
            <person name="Madan Babu M."/>
            <person name="Madera M."/>
            <person name="Marchionni L."/>
            <person name="Matsuda H."/>
            <person name="Matsuzawa S."/>
            <person name="Miki H."/>
            <person name="Mignone F."/>
            <person name="Miyake S."/>
            <person name="Morris K."/>
            <person name="Mottagui-Tabar S."/>
            <person name="Mulder N."/>
            <person name="Nakano N."/>
            <person name="Nakauchi H."/>
            <person name="Ng P."/>
            <person name="Nilsson R."/>
            <person name="Nishiguchi S."/>
            <person name="Nishikawa S."/>
            <person name="Nori F."/>
            <person name="Ohara O."/>
            <person name="Okazaki Y."/>
            <person name="Orlando V."/>
            <person name="Pang K.C."/>
            <person name="Pavan W.J."/>
            <person name="Pavesi G."/>
            <person name="Pesole G."/>
            <person name="Petrovsky N."/>
            <person name="Piazza S."/>
            <person name="Reed J."/>
            <person name="Reid J.F."/>
            <person name="Ring B.Z."/>
            <person name="Ringwald M."/>
            <person name="Rost B."/>
            <person name="Ruan Y."/>
            <person name="Salzberg S.L."/>
            <person name="Sandelin A."/>
            <person name="Schneider C."/>
            <person name="Schoenbach C."/>
            <person name="Sekiguchi K."/>
            <person name="Semple C.A."/>
            <person name="Seno S."/>
            <person name="Sessa L."/>
            <person name="Sheng Y."/>
            <person name="Shibata Y."/>
            <person name="Shimada H."/>
            <person name="Shimada K."/>
            <person name="Silva D."/>
            <person name="Sinclair B."/>
            <person name="Sperling S."/>
            <person name="Stupka E."/>
            <person name="Sugiura K."/>
            <person name="Sultana R."/>
            <person name="Takenaka Y."/>
            <person name="Taki K."/>
            <person name="Tammoja K."/>
            <person name="Tan S.L."/>
            <person name="Tang S."/>
            <person name="Taylor M.S."/>
            <person name="Tegner J."/>
            <person name="Teichmann S.A."/>
            <person name="Ueda H.R."/>
            <person name="van Nimwegen E."/>
            <person name="Verardo R."/>
            <person name="Wei C.L."/>
            <person name="Yagi K."/>
            <person name="Yamanishi H."/>
            <person name="Zabarovsky E."/>
            <person name="Zhu S."/>
            <person name="Zimmer A."/>
            <person name="Hide W."/>
            <person name="Bult C."/>
            <person name="Grimmond S.M."/>
            <person name="Teasdale R.D."/>
            <person name="Liu E.T."/>
            <person name="Brusic V."/>
            <person name="Quackenbush J."/>
            <person name="Wahlestedt C."/>
            <person name="Mattick J.S."/>
            <person name="Hume D.A."/>
            <person name="Kai C."/>
            <person name="Sasaki D."/>
            <person name="Tomaru Y."/>
            <person name="Fukuda S."/>
            <person name="Kanamori-Katayama M."/>
            <person name="Suzuki M."/>
            <person name="Aoki J."/>
            <person name="Arakawa T."/>
            <person name="Iida J."/>
            <person name="Imamura K."/>
            <person name="Itoh M."/>
            <person name="Kato T."/>
            <person name="Kawaji H."/>
            <person name="Kawagashira N."/>
            <person name="Kawashima T."/>
            <person name="Kojima M."/>
            <person name="Kondo S."/>
            <person name="Konno H."/>
            <person name="Nakano K."/>
            <person name="Ninomiya N."/>
            <person name="Nishio T."/>
            <person name="Okada M."/>
            <person name="Plessy C."/>
            <person name="Shibata K."/>
            <person name="Shiraki T."/>
            <person name="Suzuki S."/>
            <person name="Tagami M."/>
            <person name="Waki K."/>
            <person name="Watahiki A."/>
            <person name="Okamura-Oho Y."/>
            <person name="Suzuki H."/>
            <person name="Kawai J."/>
            <person name="Hayashizaki Y."/>
        </authorList>
    </citation>
    <scope>NUCLEOTIDE SEQUENCE [LARGE SCALE MRNA] (ISOFORMS 1; 2 AND 3)</scope>
    <source>
        <strain>C57BL/6J</strain>
        <tissue>Testis</tissue>
    </source>
</reference>
<reference key="2">
    <citation type="journal article" date="2004" name="Genome Res.">
        <title>The status, quality, and expansion of the NIH full-length cDNA project: the Mammalian Gene Collection (MGC).</title>
        <authorList>
            <consortium name="The MGC Project Team"/>
        </authorList>
    </citation>
    <scope>NUCLEOTIDE SEQUENCE [LARGE SCALE MRNA] (ISOFORM 1)</scope>
    <source>
        <tissue>Brain</tissue>
    </source>
</reference>
<feature type="chain" id="PRO_0000288883" description="Coiled-coil domain-containing protein 83">
    <location>
        <begin position="1"/>
        <end position="305"/>
    </location>
</feature>
<feature type="region of interest" description="Disordered" evidence="2">
    <location>
        <begin position="1"/>
        <end position="25"/>
    </location>
</feature>
<feature type="coiled-coil region" evidence="1">
    <location>
        <begin position="37"/>
        <end position="186"/>
    </location>
</feature>
<feature type="compositionally biased region" description="Basic and acidic residues" evidence="2">
    <location>
        <begin position="8"/>
        <end position="21"/>
    </location>
</feature>
<feature type="splice variant" id="VSP_025812" description="In isoform 3." evidence="3">
    <location>
        <begin position="133"/>
        <end position="305"/>
    </location>
</feature>
<feature type="splice variant" id="VSP_025813" description="In isoform 2." evidence="3">
    <original>ENDW</original>
    <variation>KMTG</variation>
    <location>
        <begin position="217"/>
        <end position="220"/>
    </location>
</feature>
<feature type="splice variant" id="VSP_025814" description="In isoform 2." evidence="3">
    <location>
        <begin position="221"/>
        <end position="305"/>
    </location>
</feature>
<feature type="sequence conflict" description="In Ref. 1; BAC25488." evidence="4" ref="1">
    <original>K</original>
    <variation>Q</variation>
    <location>
        <position position="21"/>
    </location>
</feature>
<feature type="sequence conflict" description="In Ref. 1; BAC25488." evidence="4" ref="1">
    <original>S</original>
    <variation>T</variation>
    <location>
        <position position="132"/>
    </location>
</feature>
<feature type="sequence conflict" description="In Ref. 1; BAB30106." evidence="4" ref="1">
    <original>E</original>
    <variation>G</variation>
    <location>
        <position position="178"/>
    </location>
</feature>
<dbReference type="EMBL" id="AK016080">
    <property type="protein sequence ID" value="BAB30106.1"/>
    <property type="molecule type" value="mRNA"/>
</dbReference>
<dbReference type="EMBL" id="AK016114">
    <property type="protein sequence ID" value="BAB30120.1"/>
    <property type="molecule type" value="mRNA"/>
</dbReference>
<dbReference type="EMBL" id="AK016535">
    <property type="protein sequence ID" value="BAC25488.1"/>
    <property type="molecule type" value="mRNA"/>
</dbReference>
<dbReference type="EMBL" id="BC120723">
    <property type="protein sequence ID" value="AAI20724.1"/>
    <property type="molecule type" value="mRNA"/>
</dbReference>
<dbReference type="EMBL" id="BC120721">
    <property type="protein sequence ID" value="AAI20722.1"/>
    <property type="molecule type" value="mRNA"/>
</dbReference>
<dbReference type="CCDS" id="CCDS21446.1">
    <molecule id="Q9D4V3-1"/>
</dbReference>
<dbReference type="RefSeq" id="NP_083532.1">
    <molecule id="Q9D4V3-1"/>
    <property type="nucleotide sequence ID" value="NM_029256.3"/>
</dbReference>
<dbReference type="RefSeq" id="NP_899116.1">
    <property type="nucleotide sequence ID" value="NM_183293.1"/>
</dbReference>
<dbReference type="SMR" id="Q9D4V3"/>
<dbReference type="FunCoup" id="Q9D4V3">
    <property type="interactions" value="1"/>
</dbReference>
<dbReference type="STRING" id="10090.ENSMUSP00000102839"/>
<dbReference type="iPTMnet" id="Q9D4V3"/>
<dbReference type="PhosphoSitePlus" id="Q9D4V3"/>
<dbReference type="PaxDb" id="10090-ENSMUSP00000047758"/>
<dbReference type="ProteomicsDB" id="281505">
    <molecule id="Q9D4V3-1"/>
</dbReference>
<dbReference type="ProteomicsDB" id="281506">
    <molecule id="Q9D4V3-2"/>
</dbReference>
<dbReference type="ProteomicsDB" id="281507">
    <molecule id="Q9D4V3-3"/>
</dbReference>
<dbReference type="Antibodypedia" id="31411">
    <property type="antibodies" value="147 antibodies from 23 providers"/>
</dbReference>
<dbReference type="DNASU" id="75338"/>
<dbReference type="Ensembl" id="ENSMUST00000040413.2">
    <molecule id="Q9D4V3-1"/>
    <property type="protein sequence ID" value="ENSMUSP00000047758.2"/>
    <property type="gene ID" value="ENSMUSG00000030617.14"/>
</dbReference>
<dbReference type="GeneID" id="75338"/>
<dbReference type="KEGG" id="mmu:75338"/>
<dbReference type="UCSC" id="uc009igy.1">
    <molecule id="Q9D4V3-1"/>
    <property type="organism name" value="mouse"/>
</dbReference>
<dbReference type="AGR" id="MGI:1918255"/>
<dbReference type="CTD" id="220047"/>
<dbReference type="MGI" id="MGI:1918255">
    <property type="gene designation" value="Ccdc83"/>
</dbReference>
<dbReference type="VEuPathDB" id="HostDB:ENSMUSG00000030617"/>
<dbReference type="eggNOG" id="ENOG502QS0V">
    <property type="taxonomic scope" value="Eukaryota"/>
</dbReference>
<dbReference type="GeneTree" id="ENSGT00390000013087"/>
<dbReference type="InParanoid" id="Q9D4V3"/>
<dbReference type="OrthoDB" id="10005859at2759"/>
<dbReference type="PhylomeDB" id="Q9D4V3"/>
<dbReference type="TreeFam" id="TF329512"/>
<dbReference type="BioGRID-ORCS" id="75338">
    <property type="hits" value="2 hits in 77 CRISPR screens"/>
</dbReference>
<dbReference type="ChiTaRS" id="Ccdc83">
    <property type="organism name" value="mouse"/>
</dbReference>
<dbReference type="PRO" id="PR:Q9D4V3"/>
<dbReference type="Proteomes" id="UP000000589">
    <property type="component" value="Chromosome 7"/>
</dbReference>
<dbReference type="RNAct" id="Q9D4V3">
    <property type="molecule type" value="protein"/>
</dbReference>
<dbReference type="Bgee" id="ENSMUSG00000030617">
    <property type="expression patterns" value="Expressed in seminiferous tubule of testis and 22 other cell types or tissues"/>
</dbReference>
<dbReference type="ExpressionAtlas" id="Q9D4V3">
    <property type="expression patterns" value="baseline and differential"/>
</dbReference>
<dbReference type="InterPro" id="IPR026702">
    <property type="entry name" value="CCDC83"/>
</dbReference>
<dbReference type="PANTHER" id="PTHR21468:SF1">
    <property type="entry name" value="COILED-COIL DOMAIN-CONTAINING PROTEIN 83"/>
    <property type="match status" value="1"/>
</dbReference>
<dbReference type="PANTHER" id="PTHR21468">
    <property type="entry name" value="HSD9"/>
    <property type="match status" value="1"/>
</dbReference>
<sequence length="305" mass="35642">MDSSAKGSKKDAPDGPPKDSKLPVSEALLDYHREIKENAVERFMFHIKKLREKNQKYQERNRRLKEEQNWHIKNLIKELKEKNLDEAPIVTREEVEEAMKEKWEFERQQEASLKEMRIQINEAEKLFLEKLSEKEYWEEYKNVGSAQHAQLIVSLQNDIDTVKENAEKMSEQYKVTLEDEKKRISRETMIQLKQRKEWATQHAVRFIDKNNYREIWENDWLKKEGDTASFGNVLSLLDFLPPDLHTAEPCVSSGQSRGSLRILAPFALQLWSKLSGLLPTLVTPDPVCIIWSFGPGQTNSMAICP</sequence>
<protein>
    <recommendedName>
        <fullName>Coiled-coil domain-containing protein 83</fullName>
    </recommendedName>
</protein>
<evidence type="ECO:0000255" key="1"/>
<evidence type="ECO:0000256" key="2">
    <source>
        <dbReference type="SAM" id="MobiDB-lite"/>
    </source>
</evidence>
<evidence type="ECO:0000303" key="3">
    <source>
    </source>
</evidence>
<evidence type="ECO:0000305" key="4"/>
<accession>Q9D4V3</accession>
<accession>Q8CEQ7</accession>
<accession>Q9D4W3</accession>
<organism>
    <name type="scientific">Mus musculus</name>
    <name type="common">Mouse</name>
    <dbReference type="NCBI Taxonomy" id="10090"/>
    <lineage>
        <taxon>Eukaryota</taxon>
        <taxon>Metazoa</taxon>
        <taxon>Chordata</taxon>
        <taxon>Craniata</taxon>
        <taxon>Vertebrata</taxon>
        <taxon>Euteleostomi</taxon>
        <taxon>Mammalia</taxon>
        <taxon>Eutheria</taxon>
        <taxon>Euarchontoglires</taxon>
        <taxon>Glires</taxon>
        <taxon>Rodentia</taxon>
        <taxon>Myomorpha</taxon>
        <taxon>Muroidea</taxon>
        <taxon>Muridae</taxon>
        <taxon>Murinae</taxon>
        <taxon>Mus</taxon>
        <taxon>Mus</taxon>
    </lineage>
</organism>
<proteinExistence type="evidence at transcript level"/>
<gene>
    <name type="primary">Ccdc83</name>
</gene>
<keyword id="KW-0025">Alternative splicing</keyword>
<keyword id="KW-0175">Coiled coil</keyword>
<keyword id="KW-1185">Reference proteome</keyword>
<comment type="alternative products">
    <event type="alternative splicing"/>
    <isoform>
        <id>Q9D4V3-1</id>
        <name>1</name>
        <sequence type="displayed"/>
    </isoform>
    <isoform>
        <id>Q9D4V3-2</id>
        <name>2</name>
        <sequence type="described" ref="VSP_025813 VSP_025814"/>
    </isoform>
    <isoform>
        <id>Q9D4V3-3</id>
        <name>3</name>
        <sequence type="described" ref="VSP_025812"/>
    </isoform>
</comment>
<name>CCD83_MOUSE</name>